<gene>
    <name type="primary">hir1</name>
    <name type="ORF">ATEG_04180</name>
</gene>
<accession>Q0CQ54</accession>
<name>HIR1_ASPTN</name>
<dbReference type="EMBL" id="CH476598">
    <property type="protein sequence ID" value="EAU35982.1"/>
    <property type="molecule type" value="Genomic_DNA"/>
</dbReference>
<dbReference type="RefSeq" id="XP_001213358.1">
    <property type="nucleotide sequence ID" value="XM_001213358.1"/>
</dbReference>
<dbReference type="SMR" id="Q0CQ54"/>
<dbReference type="STRING" id="341663.Q0CQ54"/>
<dbReference type="EnsemblFungi" id="EAU35982">
    <property type="protein sequence ID" value="EAU35982"/>
    <property type="gene ID" value="ATEG_04180"/>
</dbReference>
<dbReference type="GeneID" id="4318578"/>
<dbReference type="VEuPathDB" id="FungiDB:ATEG_04180"/>
<dbReference type="eggNOG" id="KOG0973">
    <property type="taxonomic scope" value="Eukaryota"/>
</dbReference>
<dbReference type="HOGENOM" id="CLU_004372_3_1_1"/>
<dbReference type="OMA" id="RGSWDGD"/>
<dbReference type="OrthoDB" id="1741719at2759"/>
<dbReference type="Proteomes" id="UP000007963">
    <property type="component" value="Unassembled WGS sequence"/>
</dbReference>
<dbReference type="GO" id="GO:0000785">
    <property type="term" value="C:chromatin"/>
    <property type="evidence" value="ECO:0007669"/>
    <property type="project" value="TreeGrafter"/>
</dbReference>
<dbReference type="GO" id="GO:0000417">
    <property type="term" value="C:HIR complex"/>
    <property type="evidence" value="ECO:0007669"/>
    <property type="project" value="EnsemblFungi"/>
</dbReference>
<dbReference type="GO" id="GO:0005634">
    <property type="term" value="C:nucleus"/>
    <property type="evidence" value="ECO:0007669"/>
    <property type="project" value="UniProtKB-SubCell"/>
</dbReference>
<dbReference type="GO" id="GO:0031491">
    <property type="term" value="F:nucleosome binding"/>
    <property type="evidence" value="ECO:0007669"/>
    <property type="project" value="TreeGrafter"/>
</dbReference>
<dbReference type="GO" id="GO:0006338">
    <property type="term" value="P:chromatin remodeling"/>
    <property type="evidence" value="ECO:0007669"/>
    <property type="project" value="InterPro"/>
</dbReference>
<dbReference type="GO" id="GO:0006351">
    <property type="term" value="P:DNA-templated transcription"/>
    <property type="evidence" value="ECO:0007669"/>
    <property type="project" value="InterPro"/>
</dbReference>
<dbReference type="GO" id="GO:0006355">
    <property type="term" value="P:regulation of DNA-templated transcription"/>
    <property type="evidence" value="ECO:0007669"/>
    <property type="project" value="InterPro"/>
</dbReference>
<dbReference type="CDD" id="cd00200">
    <property type="entry name" value="WD40"/>
    <property type="match status" value="1"/>
</dbReference>
<dbReference type="FunFam" id="2.130.10.10:FF:000290">
    <property type="entry name" value="Protein HIR"/>
    <property type="match status" value="1"/>
</dbReference>
<dbReference type="FunFam" id="2.130.10.10:FF:001557">
    <property type="entry name" value="Protein HIR"/>
    <property type="match status" value="1"/>
</dbReference>
<dbReference type="Gene3D" id="2.130.10.10">
    <property type="entry name" value="YVTN repeat-like/Quinoprotein amine dehydrogenase"/>
    <property type="match status" value="2"/>
</dbReference>
<dbReference type="InterPro" id="IPR055410">
    <property type="entry name" value="CAF1B_HIR1_beta-prop"/>
</dbReference>
<dbReference type="InterPro" id="IPR031120">
    <property type="entry name" value="HIR1-like"/>
</dbReference>
<dbReference type="InterPro" id="IPR011494">
    <property type="entry name" value="HIRA-like_C"/>
</dbReference>
<dbReference type="InterPro" id="IPR019015">
    <property type="entry name" value="HIRA_B_motif"/>
</dbReference>
<dbReference type="InterPro" id="IPR015943">
    <property type="entry name" value="WD40/YVTN_repeat-like_dom_sf"/>
</dbReference>
<dbReference type="InterPro" id="IPR036322">
    <property type="entry name" value="WD40_repeat_dom_sf"/>
</dbReference>
<dbReference type="InterPro" id="IPR001680">
    <property type="entry name" value="WD40_rpt"/>
</dbReference>
<dbReference type="PANTHER" id="PTHR13831">
    <property type="entry name" value="MEMBER OF THE HIR1 FAMILY OF WD-REPEAT PROTEINS"/>
    <property type="match status" value="1"/>
</dbReference>
<dbReference type="PANTHER" id="PTHR13831:SF0">
    <property type="entry name" value="PROTEIN HIRA"/>
    <property type="match status" value="1"/>
</dbReference>
<dbReference type="Pfam" id="PF24105">
    <property type="entry name" value="Beta-prop_CAF1B_HIR1"/>
    <property type="match status" value="1"/>
</dbReference>
<dbReference type="Pfam" id="PF07569">
    <property type="entry name" value="Hira"/>
    <property type="match status" value="1"/>
</dbReference>
<dbReference type="Pfam" id="PF09453">
    <property type="entry name" value="HIRA_B"/>
    <property type="match status" value="1"/>
</dbReference>
<dbReference type="Pfam" id="PF00400">
    <property type="entry name" value="WD40"/>
    <property type="match status" value="2"/>
</dbReference>
<dbReference type="SMART" id="SM00320">
    <property type="entry name" value="WD40"/>
    <property type="match status" value="7"/>
</dbReference>
<dbReference type="SUPFAM" id="SSF50978">
    <property type="entry name" value="WD40 repeat-like"/>
    <property type="match status" value="2"/>
</dbReference>
<dbReference type="PROSITE" id="PS50082">
    <property type="entry name" value="WD_REPEATS_2"/>
    <property type="match status" value="3"/>
</dbReference>
<dbReference type="PROSITE" id="PS50294">
    <property type="entry name" value="WD_REPEATS_REGION"/>
    <property type="match status" value="1"/>
</dbReference>
<comment type="function">
    <text evidence="1">Required for replication-independent chromatin assembly and for the periodic repression of histone gene transcription during the cell cycle.</text>
</comment>
<comment type="subcellular location">
    <subcellularLocation>
        <location evidence="1">Nucleus</location>
    </subcellularLocation>
</comment>
<comment type="similarity">
    <text evidence="3">Belongs to the WD repeat HIR1 family.</text>
</comment>
<organism>
    <name type="scientific">Aspergillus terreus (strain NIH 2624 / FGSC A1156)</name>
    <dbReference type="NCBI Taxonomy" id="341663"/>
    <lineage>
        <taxon>Eukaryota</taxon>
        <taxon>Fungi</taxon>
        <taxon>Dikarya</taxon>
        <taxon>Ascomycota</taxon>
        <taxon>Pezizomycotina</taxon>
        <taxon>Eurotiomycetes</taxon>
        <taxon>Eurotiomycetidae</taxon>
        <taxon>Eurotiales</taxon>
        <taxon>Aspergillaceae</taxon>
        <taxon>Aspergillus</taxon>
        <taxon>Aspergillus subgen. Circumdati</taxon>
    </lineage>
</organism>
<evidence type="ECO:0000250" key="1"/>
<evidence type="ECO:0000256" key="2">
    <source>
        <dbReference type="SAM" id="MobiDB-lite"/>
    </source>
</evidence>
<evidence type="ECO:0000305" key="3"/>
<proteinExistence type="inferred from homology"/>
<keyword id="KW-0156">Chromatin regulator</keyword>
<keyword id="KW-0539">Nucleus</keyword>
<keyword id="KW-1185">Reference proteome</keyword>
<keyword id="KW-0677">Repeat</keyword>
<keyword id="KW-0678">Repressor</keyword>
<keyword id="KW-0804">Transcription</keyword>
<keyword id="KW-0805">Transcription regulation</keyword>
<keyword id="KW-0853">WD repeat</keyword>
<protein>
    <recommendedName>
        <fullName>Protein hir1</fullName>
    </recommendedName>
</protein>
<reference key="1">
    <citation type="submission" date="2005-09" db="EMBL/GenBank/DDBJ databases">
        <title>Annotation of the Aspergillus terreus NIH2624 genome.</title>
        <authorList>
            <person name="Birren B.W."/>
            <person name="Lander E.S."/>
            <person name="Galagan J.E."/>
            <person name="Nusbaum C."/>
            <person name="Devon K."/>
            <person name="Henn M."/>
            <person name="Ma L.-J."/>
            <person name="Jaffe D.B."/>
            <person name="Butler J."/>
            <person name="Alvarez P."/>
            <person name="Gnerre S."/>
            <person name="Grabherr M."/>
            <person name="Kleber M."/>
            <person name="Mauceli E.W."/>
            <person name="Brockman W."/>
            <person name="Rounsley S."/>
            <person name="Young S.K."/>
            <person name="LaButti K."/>
            <person name="Pushparaj V."/>
            <person name="DeCaprio D."/>
            <person name="Crawford M."/>
            <person name="Koehrsen M."/>
            <person name="Engels R."/>
            <person name="Montgomery P."/>
            <person name="Pearson M."/>
            <person name="Howarth C."/>
            <person name="Larson L."/>
            <person name="Luoma S."/>
            <person name="White J."/>
            <person name="Alvarado L."/>
            <person name="Kodira C.D."/>
            <person name="Zeng Q."/>
            <person name="Oleary S."/>
            <person name="Yandava C."/>
            <person name="Denning D.W."/>
            <person name="Nierman W.C."/>
            <person name="Milne T."/>
            <person name="Madden K."/>
        </authorList>
    </citation>
    <scope>NUCLEOTIDE SEQUENCE [LARGE SCALE GENOMIC DNA]</scope>
    <source>
        <strain>NIH 2624 / FGSC A1156</strain>
    </source>
</reference>
<feature type="chain" id="PRO_0000286404" description="Protein hir1">
    <location>
        <begin position="1"/>
        <end position="999"/>
    </location>
</feature>
<feature type="repeat" description="WD 1">
    <location>
        <begin position="15"/>
        <end position="54"/>
    </location>
</feature>
<feature type="repeat" description="WD 2">
    <location>
        <begin position="69"/>
        <end position="108"/>
    </location>
</feature>
<feature type="repeat" description="WD 3">
    <location>
        <begin position="130"/>
        <end position="169"/>
    </location>
</feature>
<feature type="repeat" description="WD 4">
    <location>
        <begin position="172"/>
        <end position="211"/>
    </location>
</feature>
<feature type="repeat" description="WD 5">
    <location>
        <begin position="233"/>
        <end position="276"/>
    </location>
</feature>
<feature type="repeat" description="WD 6">
    <location>
        <begin position="279"/>
        <end position="339"/>
    </location>
</feature>
<feature type="repeat" description="WD 7">
    <location>
        <begin position="343"/>
        <end position="384"/>
    </location>
</feature>
<feature type="region of interest" description="Disordered" evidence="2">
    <location>
        <begin position="439"/>
        <end position="476"/>
    </location>
</feature>
<feature type="compositionally biased region" description="Polar residues" evidence="2">
    <location>
        <begin position="439"/>
        <end position="468"/>
    </location>
</feature>
<sequence>MHIIKPVWLTHGGKLVVHDSSSSWHGPLTPTLLSTGERKDFEVYSCDVSPDGSRLVTAAGDGYVRIWSTEAIRNTDDSSQKPKQLASMSNHSGTIHTVRFSPNGKYLASGADDKIVCIYTLDANPPSHSTFGWSYDSSILVSVGLDSKVVVWSGHTFEKLKTLSVHQSHVKGITFDPANKYFATASDDRTVKIFRFTSPAPNSTAHDQMNNFVLETTISAPFQNSPLTAYFRRCSWSPDGMHIAAANAVNGPVSSVAIINRGSWDGDINLIGHEAPVEVCAFSPRLYSTQPPNKQTPDNQGQAVTVIACAGGDKSLSIWITTNPRPIVVAQELAAKSISDLAWSPDGTCLYATALDGTILAVRFEDGDLGYPMAMEENEKSLTKFGTNRRGAGITETTDGLLLEEKSKAGELKGVEGRMGALMGDGHASAEATVNGKALSSNGAAPAQGTSPTADAQKTQTNGTTTPAAQEADKPDPYQAKLERLKQRPTYTKDGKKRIAPLLVSGAGAAESSLPQARLMASVSSQVKADTPQSIVDLSKPFDGLPKGGLAALLFGNKRKLAQLEGDEDGHVEKRVALASQNGATPIMANTPDGLLPAQPQPPATGQQQTPEYIRPAVTNPCMAISQLRLAVPKVRSQIVRAIDSTGKPTEPPGASSEANKSRVDLVFEARNPSPASLTGRAVDREPVRLTLFRGEQPLWQDFLPRTVLLVTGNQSMWAAACEDGSVYIWTPAGRRLVSALVLEAQPVILECNGPWILCISAVGMCYVWNVKHLSSPHPPISLQPVLDAAVHTLGAHPSSAPAITNARINSEGRVIVALSNGEGYAYSPSMYTWQRMSEAWWAVGSQYWNTTEAPVGNLQSTDSQDKDAKAAVSAGIIPFLERNTTNETLLRGRAYFLQRLIKVLLSREGYESFESSVSIAHLENRLAAALSLGAKEEFRLYLSMYAKRIGAEGLKNKVEELLKGLIGGKHRDLQRVTVPYAKLLGVVDESEAGDAMET</sequence>